<comment type="function">
    <text evidence="1">Functions in the biosynthesis of branched-chain amino acids. Catalyzes the dehydration of (2R,3R)-2,3-dihydroxy-3-methylpentanoate (2,3-dihydroxy-3-methylvalerate) into 2-oxo-3-methylpentanoate (2-oxo-3-methylvalerate) and of (2R)-2,3-dihydroxy-3-methylbutanoate (2,3-dihydroxyisovalerate) into 2-oxo-3-methylbutanoate (2-oxoisovalerate), the penultimate precursor to L-isoleucine and L-valine, respectively.</text>
</comment>
<comment type="catalytic activity">
    <reaction evidence="1">
        <text>(2R)-2,3-dihydroxy-3-methylbutanoate = 3-methyl-2-oxobutanoate + H2O</text>
        <dbReference type="Rhea" id="RHEA:24809"/>
        <dbReference type="ChEBI" id="CHEBI:11851"/>
        <dbReference type="ChEBI" id="CHEBI:15377"/>
        <dbReference type="ChEBI" id="CHEBI:49072"/>
        <dbReference type="EC" id="4.2.1.9"/>
    </reaction>
    <physiologicalReaction direction="left-to-right" evidence="1">
        <dbReference type="Rhea" id="RHEA:24810"/>
    </physiologicalReaction>
</comment>
<comment type="catalytic activity">
    <reaction evidence="1">
        <text>(2R,3R)-2,3-dihydroxy-3-methylpentanoate = (S)-3-methyl-2-oxopentanoate + H2O</text>
        <dbReference type="Rhea" id="RHEA:27694"/>
        <dbReference type="ChEBI" id="CHEBI:15377"/>
        <dbReference type="ChEBI" id="CHEBI:35146"/>
        <dbReference type="ChEBI" id="CHEBI:49258"/>
        <dbReference type="EC" id="4.2.1.9"/>
    </reaction>
    <physiologicalReaction direction="left-to-right" evidence="1">
        <dbReference type="Rhea" id="RHEA:27695"/>
    </physiologicalReaction>
</comment>
<comment type="cofactor">
    <cofactor evidence="1">
        <name>[2Fe-2S] cluster</name>
        <dbReference type="ChEBI" id="CHEBI:190135"/>
    </cofactor>
    <text evidence="1">Binds 1 [2Fe-2S] cluster per subunit. This cluster acts as a Lewis acid cofactor.</text>
</comment>
<comment type="cofactor">
    <cofactor evidence="1">
        <name>Mg(2+)</name>
        <dbReference type="ChEBI" id="CHEBI:18420"/>
    </cofactor>
</comment>
<comment type="pathway">
    <text evidence="1">Amino-acid biosynthesis; L-isoleucine biosynthesis; L-isoleucine from 2-oxobutanoate: step 3/4.</text>
</comment>
<comment type="pathway">
    <text evidence="1">Amino-acid biosynthesis; L-valine biosynthesis; L-valine from pyruvate: step 3/4.</text>
</comment>
<comment type="subunit">
    <text evidence="1">Homodimer.</text>
</comment>
<comment type="similarity">
    <text evidence="1">Belongs to the IlvD/Edd family.</text>
</comment>
<organism>
    <name type="scientific">Escherichia coli O81 (strain ED1a)</name>
    <dbReference type="NCBI Taxonomy" id="585397"/>
    <lineage>
        <taxon>Bacteria</taxon>
        <taxon>Pseudomonadati</taxon>
        <taxon>Pseudomonadota</taxon>
        <taxon>Gammaproteobacteria</taxon>
        <taxon>Enterobacterales</taxon>
        <taxon>Enterobacteriaceae</taxon>
        <taxon>Escherichia</taxon>
    </lineage>
</organism>
<proteinExistence type="inferred from homology"/>
<evidence type="ECO:0000255" key="1">
    <source>
        <dbReference type="HAMAP-Rule" id="MF_00012"/>
    </source>
</evidence>
<keyword id="KW-0001">2Fe-2S</keyword>
<keyword id="KW-0028">Amino-acid biosynthesis</keyword>
<keyword id="KW-0100">Branched-chain amino acid biosynthesis</keyword>
<keyword id="KW-0408">Iron</keyword>
<keyword id="KW-0411">Iron-sulfur</keyword>
<keyword id="KW-0456">Lyase</keyword>
<keyword id="KW-0460">Magnesium</keyword>
<keyword id="KW-0479">Metal-binding</keyword>
<dbReference type="EC" id="4.2.1.9" evidence="1"/>
<dbReference type="EMBL" id="CU928162">
    <property type="protein sequence ID" value="CAR10437.1"/>
    <property type="molecule type" value="Genomic_DNA"/>
</dbReference>
<dbReference type="RefSeq" id="WP_001127372.1">
    <property type="nucleotide sequence ID" value="NC_011745.1"/>
</dbReference>
<dbReference type="SMR" id="B7N266"/>
<dbReference type="KEGG" id="ecq:ECED1_4457"/>
<dbReference type="HOGENOM" id="CLU_014271_4_2_6"/>
<dbReference type="UniPathway" id="UPA00047">
    <property type="reaction ID" value="UER00057"/>
</dbReference>
<dbReference type="UniPathway" id="UPA00049">
    <property type="reaction ID" value="UER00061"/>
</dbReference>
<dbReference type="Proteomes" id="UP000000748">
    <property type="component" value="Chromosome"/>
</dbReference>
<dbReference type="GO" id="GO:0005829">
    <property type="term" value="C:cytosol"/>
    <property type="evidence" value="ECO:0007669"/>
    <property type="project" value="TreeGrafter"/>
</dbReference>
<dbReference type="GO" id="GO:0051537">
    <property type="term" value="F:2 iron, 2 sulfur cluster binding"/>
    <property type="evidence" value="ECO:0007669"/>
    <property type="project" value="UniProtKB-UniRule"/>
</dbReference>
<dbReference type="GO" id="GO:0004160">
    <property type="term" value="F:dihydroxy-acid dehydratase activity"/>
    <property type="evidence" value="ECO:0007669"/>
    <property type="project" value="UniProtKB-UniRule"/>
</dbReference>
<dbReference type="GO" id="GO:0000287">
    <property type="term" value="F:magnesium ion binding"/>
    <property type="evidence" value="ECO:0007669"/>
    <property type="project" value="UniProtKB-UniRule"/>
</dbReference>
<dbReference type="GO" id="GO:0009097">
    <property type="term" value="P:isoleucine biosynthetic process"/>
    <property type="evidence" value="ECO:0007669"/>
    <property type="project" value="UniProtKB-UniRule"/>
</dbReference>
<dbReference type="GO" id="GO:0009099">
    <property type="term" value="P:L-valine biosynthetic process"/>
    <property type="evidence" value="ECO:0007669"/>
    <property type="project" value="UniProtKB-UniRule"/>
</dbReference>
<dbReference type="FunFam" id="3.50.30.80:FF:000001">
    <property type="entry name" value="Dihydroxy-acid dehydratase"/>
    <property type="match status" value="1"/>
</dbReference>
<dbReference type="Gene3D" id="3.50.30.80">
    <property type="entry name" value="IlvD/EDD C-terminal domain-like"/>
    <property type="match status" value="1"/>
</dbReference>
<dbReference type="HAMAP" id="MF_00012">
    <property type="entry name" value="IlvD"/>
    <property type="match status" value="1"/>
</dbReference>
<dbReference type="InterPro" id="IPR042096">
    <property type="entry name" value="Dihydro-acid_dehy_C"/>
</dbReference>
<dbReference type="InterPro" id="IPR004404">
    <property type="entry name" value="DihydroxyA_deHydtase"/>
</dbReference>
<dbReference type="InterPro" id="IPR020558">
    <property type="entry name" value="DiOHA_6PGluconate_deHydtase_CS"/>
</dbReference>
<dbReference type="InterPro" id="IPR056740">
    <property type="entry name" value="ILV_EDD_C"/>
</dbReference>
<dbReference type="InterPro" id="IPR000581">
    <property type="entry name" value="ILV_EDD_N"/>
</dbReference>
<dbReference type="InterPro" id="IPR037237">
    <property type="entry name" value="IlvD/EDD_N"/>
</dbReference>
<dbReference type="NCBIfam" id="TIGR00110">
    <property type="entry name" value="ilvD"/>
    <property type="match status" value="1"/>
</dbReference>
<dbReference type="NCBIfam" id="NF009103">
    <property type="entry name" value="PRK12448.1"/>
    <property type="match status" value="1"/>
</dbReference>
<dbReference type="PANTHER" id="PTHR43661">
    <property type="entry name" value="D-XYLONATE DEHYDRATASE"/>
    <property type="match status" value="1"/>
</dbReference>
<dbReference type="PANTHER" id="PTHR43661:SF3">
    <property type="entry name" value="D-XYLONATE DEHYDRATASE YAGF-RELATED"/>
    <property type="match status" value="1"/>
</dbReference>
<dbReference type="Pfam" id="PF24877">
    <property type="entry name" value="ILV_EDD_C"/>
    <property type="match status" value="1"/>
</dbReference>
<dbReference type="Pfam" id="PF00920">
    <property type="entry name" value="ILVD_EDD_N"/>
    <property type="match status" value="1"/>
</dbReference>
<dbReference type="SUPFAM" id="SSF143975">
    <property type="entry name" value="IlvD/EDD N-terminal domain-like"/>
    <property type="match status" value="1"/>
</dbReference>
<dbReference type="SUPFAM" id="SSF52016">
    <property type="entry name" value="LeuD/IlvD-like"/>
    <property type="match status" value="1"/>
</dbReference>
<dbReference type="PROSITE" id="PS00886">
    <property type="entry name" value="ILVD_EDD_1"/>
    <property type="match status" value="1"/>
</dbReference>
<dbReference type="PROSITE" id="PS00887">
    <property type="entry name" value="ILVD_EDD_2"/>
    <property type="match status" value="1"/>
</dbReference>
<sequence>MPKYRSATTTHGRNMAGARALWRATGMTDADFGKPIIAVVNSFTQFVPGHVHLRDLGKLVAEQIEAAGGVAKEFNTIAVDDGIAMGHGGMLYSLPSRELIADSVEYMVNAHCADAMVCISNCDKITPGMLMASLRLNIPVIFVSGGPMEAGKTKLSDQIIKLDLVDAMIQGADPKVSDSQSDQVERSACPTCGSCSGMFTANSMNCLTEALGLSQPGNGSLLATHADRKQLFLNAGKRIVELTKRYYEQDDESALPRNIASKAAFENAMTLDIAMGGSTNTVLHLLAAAQEAEIDFTMSDIDKLSRKVPQLCKVAPSTQKYHMEDVHRAGGVIGILGELDRAGLLNRDVKNVLGLTLPQTLEQYDIIVTQDDAVKNMFRAGPAGIRTTQAFSQDCRWDTLDDDRSNGCIRSLEHAYSKDGGLAVLYGNFAENGCIVKTAGVDDSILKFTGPAKVYESQDDAVEAILGGKVVAGDVVVIRYEGPKGGPGMQEMLYPTSFLKSMGLGKACALITDGRFSGGTSGLSIGHVSPEAASGGSIGLIEDGDLIAIDIPNRGIQLQVSDAELAARREAQEARGNKAWTPKNRERQVSFALRAYASLATSADKGAVRDKSKLGG</sequence>
<protein>
    <recommendedName>
        <fullName evidence="1">Dihydroxy-acid dehydratase</fullName>
        <shortName evidence="1">DAD</shortName>
        <ecNumber evidence="1">4.2.1.9</ecNumber>
    </recommendedName>
</protein>
<reference key="1">
    <citation type="journal article" date="2009" name="PLoS Genet.">
        <title>Organised genome dynamics in the Escherichia coli species results in highly diverse adaptive paths.</title>
        <authorList>
            <person name="Touchon M."/>
            <person name="Hoede C."/>
            <person name="Tenaillon O."/>
            <person name="Barbe V."/>
            <person name="Baeriswyl S."/>
            <person name="Bidet P."/>
            <person name="Bingen E."/>
            <person name="Bonacorsi S."/>
            <person name="Bouchier C."/>
            <person name="Bouvet O."/>
            <person name="Calteau A."/>
            <person name="Chiapello H."/>
            <person name="Clermont O."/>
            <person name="Cruveiller S."/>
            <person name="Danchin A."/>
            <person name="Diard M."/>
            <person name="Dossat C."/>
            <person name="Karoui M.E."/>
            <person name="Frapy E."/>
            <person name="Garry L."/>
            <person name="Ghigo J.M."/>
            <person name="Gilles A.M."/>
            <person name="Johnson J."/>
            <person name="Le Bouguenec C."/>
            <person name="Lescat M."/>
            <person name="Mangenot S."/>
            <person name="Martinez-Jehanne V."/>
            <person name="Matic I."/>
            <person name="Nassif X."/>
            <person name="Oztas S."/>
            <person name="Petit M.A."/>
            <person name="Pichon C."/>
            <person name="Rouy Z."/>
            <person name="Ruf C.S."/>
            <person name="Schneider D."/>
            <person name="Tourret J."/>
            <person name="Vacherie B."/>
            <person name="Vallenet D."/>
            <person name="Medigue C."/>
            <person name="Rocha E.P.C."/>
            <person name="Denamur E."/>
        </authorList>
    </citation>
    <scope>NUCLEOTIDE SEQUENCE [LARGE SCALE GENOMIC DNA]</scope>
    <source>
        <strain>ED1a</strain>
    </source>
</reference>
<name>ILVD_ECO81</name>
<accession>B7N266</accession>
<feature type="chain" id="PRO_1000190665" description="Dihydroxy-acid dehydratase">
    <location>
        <begin position="1"/>
        <end position="616"/>
    </location>
</feature>
<feature type="active site" description="Proton acceptor" evidence="1">
    <location>
        <position position="517"/>
    </location>
</feature>
<feature type="binding site" evidence="1">
    <location>
        <position position="81"/>
    </location>
    <ligand>
        <name>Mg(2+)</name>
        <dbReference type="ChEBI" id="CHEBI:18420"/>
    </ligand>
</feature>
<feature type="binding site" evidence="1">
    <location>
        <position position="122"/>
    </location>
    <ligand>
        <name>[2Fe-2S] cluster</name>
        <dbReference type="ChEBI" id="CHEBI:190135"/>
    </ligand>
</feature>
<feature type="binding site" evidence="1">
    <location>
        <position position="123"/>
    </location>
    <ligand>
        <name>Mg(2+)</name>
        <dbReference type="ChEBI" id="CHEBI:18420"/>
    </ligand>
</feature>
<feature type="binding site" description="via carbamate group" evidence="1">
    <location>
        <position position="124"/>
    </location>
    <ligand>
        <name>Mg(2+)</name>
        <dbReference type="ChEBI" id="CHEBI:18420"/>
    </ligand>
</feature>
<feature type="binding site" evidence="1">
    <location>
        <position position="195"/>
    </location>
    <ligand>
        <name>[2Fe-2S] cluster</name>
        <dbReference type="ChEBI" id="CHEBI:190135"/>
    </ligand>
</feature>
<feature type="binding site" evidence="1">
    <location>
        <position position="491"/>
    </location>
    <ligand>
        <name>Mg(2+)</name>
        <dbReference type="ChEBI" id="CHEBI:18420"/>
    </ligand>
</feature>
<feature type="modified residue" description="N6-carboxylysine" evidence="1">
    <location>
        <position position="124"/>
    </location>
</feature>
<gene>
    <name evidence="1" type="primary">ilvD</name>
    <name type="ordered locus">ECED1_4457</name>
</gene>